<evidence type="ECO:0000250" key="1"/>
<evidence type="ECO:0000269" key="2">
    <source>
    </source>
</evidence>
<evidence type="ECO:0000305" key="3"/>
<proteinExistence type="evidence at protein level"/>
<keyword id="KW-0520">NAD</keyword>
<keyword id="KW-0560">Oxidoreductase</keyword>
<keyword id="KW-1185">Reference proteome</keyword>
<feature type="chain" id="PRO_0000076037" description="Putative 2-hydroxyacid dehydrogenase YGL185C">
    <location>
        <begin position="1"/>
        <end position="379"/>
    </location>
</feature>
<feature type="active site" evidence="1">
    <location>
        <position position="293"/>
    </location>
</feature>
<feature type="active site" evidence="1">
    <location>
        <position position="322"/>
    </location>
</feature>
<feature type="active site" description="Proton donor" evidence="1">
    <location>
        <position position="341"/>
    </location>
</feature>
<feature type="binding site" evidence="1">
    <location>
        <begin position="207"/>
        <end position="208"/>
    </location>
    <ligand>
        <name>NAD(+)</name>
        <dbReference type="ChEBI" id="CHEBI:57540"/>
    </ligand>
</feature>
<feature type="binding site" evidence="1">
    <location>
        <begin position="291"/>
        <end position="293"/>
    </location>
    <ligand>
        <name>NAD(+)</name>
        <dbReference type="ChEBI" id="CHEBI:57540"/>
    </ligand>
</feature>
<feature type="binding site" evidence="1">
    <location>
        <position position="317"/>
    </location>
    <ligand>
        <name>NAD(+)</name>
        <dbReference type="ChEBI" id="CHEBI:57540"/>
    </ligand>
</feature>
<feature type="binding site" evidence="1">
    <location>
        <begin position="341"/>
        <end position="344"/>
    </location>
    <ligand>
        <name>NAD(+)</name>
        <dbReference type="ChEBI" id="CHEBI:57540"/>
    </ligand>
</feature>
<reference key="1">
    <citation type="journal article" date="1997" name="Yeast">
        <title>Sequencing of a 40.5 kb fragment located on the left arm of chromosome VII from Saccharomyces cerevisiae.</title>
        <authorList>
            <person name="Coglievina M."/>
            <person name="Klima R."/>
            <person name="Bertani I."/>
            <person name="Delneri D."/>
            <person name="Zaccaria P."/>
            <person name="Bruschi C.V."/>
        </authorList>
    </citation>
    <scope>NUCLEOTIDE SEQUENCE [GENOMIC DNA]</scope>
    <source>
        <strain>ATCC 96604 / S288c / FY1679</strain>
    </source>
</reference>
<reference key="2">
    <citation type="journal article" date="1997" name="Nature">
        <title>The nucleotide sequence of Saccharomyces cerevisiae chromosome VII.</title>
        <authorList>
            <person name="Tettelin H."/>
            <person name="Agostoni-Carbone M.L."/>
            <person name="Albermann K."/>
            <person name="Albers M."/>
            <person name="Arroyo J."/>
            <person name="Backes U."/>
            <person name="Barreiros T."/>
            <person name="Bertani I."/>
            <person name="Bjourson A.J."/>
            <person name="Brueckner M."/>
            <person name="Bruschi C.V."/>
            <person name="Carignani G."/>
            <person name="Castagnoli L."/>
            <person name="Cerdan E."/>
            <person name="Clemente M.L."/>
            <person name="Coblenz A."/>
            <person name="Coglievina M."/>
            <person name="Coissac E."/>
            <person name="Defoor E."/>
            <person name="Del Bino S."/>
            <person name="Delius H."/>
            <person name="Delneri D."/>
            <person name="de Wergifosse P."/>
            <person name="Dujon B."/>
            <person name="Durand P."/>
            <person name="Entian K.-D."/>
            <person name="Eraso P."/>
            <person name="Escribano V."/>
            <person name="Fabiani L."/>
            <person name="Fartmann B."/>
            <person name="Feroli F."/>
            <person name="Feuermann M."/>
            <person name="Frontali L."/>
            <person name="Garcia-Gonzalez M."/>
            <person name="Garcia-Saez M.I."/>
            <person name="Goffeau A."/>
            <person name="Guerreiro P."/>
            <person name="Hani J."/>
            <person name="Hansen M."/>
            <person name="Hebling U."/>
            <person name="Hernandez K."/>
            <person name="Heumann K."/>
            <person name="Hilger F."/>
            <person name="Hofmann B."/>
            <person name="Indge K.J."/>
            <person name="James C.M."/>
            <person name="Klima R."/>
            <person name="Koetter P."/>
            <person name="Kramer B."/>
            <person name="Kramer W."/>
            <person name="Lauquin G."/>
            <person name="Leuther H."/>
            <person name="Louis E.J."/>
            <person name="Maillier E."/>
            <person name="Marconi A."/>
            <person name="Martegani E."/>
            <person name="Mazon M.J."/>
            <person name="Mazzoni C."/>
            <person name="McReynolds A.D.K."/>
            <person name="Melchioretto P."/>
            <person name="Mewes H.-W."/>
            <person name="Minenkova O."/>
            <person name="Mueller-Auer S."/>
            <person name="Nawrocki A."/>
            <person name="Netter P."/>
            <person name="Neu R."/>
            <person name="Nombela C."/>
            <person name="Oliver S.G."/>
            <person name="Panzeri L."/>
            <person name="Paoluzi S."/>
            <person name="Plevani P."/>
            <person name="Portetelle D."/>
            <person name="Portillo F."/>
            <person name="Potier S."/>
            <person name="Purnelle B."/>
            <person name="Rieger M."/>
            <person name="Riles L."/>
            <person name="Rinaldi T."/>
            <person name="Robben J."/>
            <person name="Rodrigues-Pousada C."/>
            <person name="Rodriguez-Belmonte E."/>
            <person name="Rodriguez-Torres A.M."/>
            <person name="Rose M."/>
            <person name="Ruzzi M."/>
            <person name="Saliola M."/>
            <person name="Sanchez-Perez M."/>
            <person name="Schaefer B."/>
            <person name="Schaefer M."/>
            <person name="Scharfe M."/>
            <person name="Schmidheini T."/>
            <person name="Schreer A."/>
            <person name="Skala J."/>
            <person name="Souciet J.-L."/>
            <person name="Steensma H.Y."/>
            <person name="Talla E."/>
            <person name="Thierry A."/>
            <person name="Vandenbol M."/>
            <person name="van der Aart Q.J.M."/>
            <person name="Van Dyck L."/>
            <person name="Vanoni M."/>
            <person name="Verhasselt P."/>
            <person name="Voet M."/>
            <person name="Volckaert G."/>
            <person name="Wambutt R."/>
            <person name="Watson M.D."/>
            <person name="Weber N."/>
            <person name="Wedler E."/>
            <person name="Wedler H."/>
            <person name="Wipfli P."/>
            <person name="Wolf K."/>
            <person name="Wright L.F."/>
            <person name="Zaccaria P."/>
            <person name="Zimmermann M."/>
            <person name="Zollner A."/>
            <person name="Kleine K."/>
        </authorList>
    </citation>
    <scope>NUCLEOTIDE SEQUENCE [LARGE SCALE GENOMIC DNA]</scope>
    <source>
        <strain>ATCC 204508 / S288c</strain>
    </source>
</reference>
<reference key="3">
    <citation type="journal article" date="2014" name="G3 (Bethesda)">
        <title>The reference genome sequence of Saccharomyces cerevisiae: Then and now.</title>
        <authorList>
            <person name="Engel S.R."/>
            <person name="Dietrich F.S."/>
            <person name="Fisk D.G."/>
            <person name="Binkley G."/>
            <person name="Balakrishnan R."/>
            <person name="Costanzo M.C."/>
            <person name="Dwight S.S."/>
            <person name="Hitz B.C."/>
            <person name="Karra K."/>
            <person name="Nash R.S."/>
            <person name="Weng S."/>
            <person name="Wong E.D."/>
            <person name="Lloyd P."/>
            <person name="Skrzypek M.S."/>
            <person name="Miyasato S.R."/>
            <person name="Simison M."/>
            <person name="Cherry J.M."/>
        </authorList>
    </citation>
    <scope>GENOME REANNOTATION</scope>
    <source>
        <strain>ATCC 204508 / S288c</strain>
    </source>
</reference>
<reference key="4">
    <citation type="journal article" date="2003" name="Nature">
        <title>Global analysis of protein expression in yeast.</title>
        <authorList>
            <person name="Ghaemmaghami S."/>
            <person name="Huh W.-K."/>
            <person name="Bower K."/>
            <person name="Howson R.W."/>
            <person name="Belle A."/>
            <person name="Dephoure N."/>
            <person name="O'Shea E.K."/>
            <person name="Weissman J.S."/>
        </authorList>
    </citation>
    <scope>LEVEL OF PROTEIN EXPRESSION [LARGE SCALE ANALYSIS]</scope>
</reference>
<dbReference type="EC" id="1.-.-.-"/>
<dbReference type="EMBL" id="X91489">
    <property type="protein sequence ID" value="CAA62789.1"/>
    <property type="molecule type" value="Genomic_DNA"/>
</dbReference>
<dbReference type="EMBL" id="Z72707">
    <property type="protein sequence ID" value="CAA96897.1"/>
    <property type="molecule type" value="Genomic_DNA"/>
</dbReference>
<dbReference type="EMBL" id="BK006941">
    <property type="protein sequence ID" value="DAA07930.1"/>
    <property type="molecule type" value="Genomic_DNA"/>
</dbReference>
<dbReference type="PIR" id="S61132">
    <property type="entry name" value="S61132"/>
</dbReference>
<dbReference type="RefSeq" id="NP_011330.1">
    <property type="nucleotide sequence ID" value="NM_001181050.1"/>
</dbReference>
<dbReference type="SMR" id="P53100"/>
<dbReference type="BioGRID" id="33070">
    <property type="interactions" value="79"/>
</dbReference>
<dbReference type="DIP" id="DIP-2562N"/>
<dbReference type="FunCoup" id="P53100">
    <property type="interactions" value="38"/>
</dbReference>
<dbReference type="IntAct" id="P53100">
    <property type="interactions" value="3"/>
</dbReference>
<dbReference type="MINT" id="P53100"/>
<dbReference type="STRING" id="4932.YGL185C"/>
<dbReference type="iPTMnet" id="P53100"/>
<dbReference type="PaxDb" id="4932-YGL185C"/>
<dbReference type="PeptideAtlas" id="P53100"/>
<dbReference type="EnsemblFungi" id="YGL185C_mRNA">
    <property type="protein sequence ID" value="YGL185C"/>
    <property type="gene ID" value="YGL185C"/>
</dbReference>
<dbReference type="GeneID" id="852690"/>
<dbReference type="KEGG" id="sce:YGL185C"/>
<dbReference type="AGR" id="SGD:S000003153"/>
<dbReference type="SGD" id="S000003153">
    <property type="gene designation" value="YGL185C"/>
</dbReference>
<dbReference type="VEuPathDB" id="FungiDB:YGL185C"/>
<dbReference type="eggNOG" id="KOG0069">
    <property type="taxonomic scope" value="Eukaryota"/>
</dbReference>
<dbReference type="GeneTree" id="ENSGT00940000176460"/>
<dbReference type="HOGENOM" id="CLU_019796_1_2_1"/>
<dbReference type="InParanoid" id="P53100"/>
<dbReference type="OMA" id="LKCIVLC"/>
<dbReference type="OrthoDB" id="298012at2759"/>
<dbReference type="BioCyc" id="YEAST:G3O-30670-MONOMER"/>
<dbReference type="BioGRID-ORCS" id="852690">
    <property type="hits" value="0 hits in 10 CRISPR screens"/>
</dbReference>
<dbReference type="PRO" id="PR:P53100"/>
<dbReference type="Proteomes" id="UP000002311">
    <property type="component" value="Chromosome VII"/>
</dbReference>
<dbReference type="RNAct" id="P53100">
    <property type="molecule type" value="protein"/>
</dbReference>
<dbReference type="GO" id="GO:0005737">
    <property type="term" value="C:cytoplasm"/>
    <property type="evidence" value="ECO:0007005"/>
    <property type="project" value="SGD"/>
</dbReference>
<dbReference type="GO" id="GO:0005829">
    <property type="term" value="C:cytosol"/>
    <property type="evidence" value="ECO:0000318"/>
    <property type="project" value="GO_Central"/>
</dbReference>
<dbReference type="GO" id="GO:0030267">
    <property type="term" value="F:glyoxylate reductase (NADPH) activity"/>
    <property type="evidence" value="ECO:0000318"/>
    <property type="project" value="GO_Central"/>
</dbReference>
<dbReference type="GO" id="GO:0016618">
    <property type="term" value="F:hydroxypyruvate reductase [NAD(P)H] activity"/>
    <property type="evidence" value="ECO:0000318"/>
    <property type="project" value="GO_Central"/>
</dbReference>
<dbReference type="GO" id="GO:0051287">
    <property type="term" value="F:NAD binding"/>
    <property type="evidence" value="ECO:0007669"/>
    <property type="project" value="InterPro"/>
</dbReference>
<dbReference type="GO" id="GO:0016616">
    <property type="term" value="F:oxidoreductase activity, acting on the CH-OH group of donors, NAD or NADP as acceptor"/>
    <property type="evidence" value="ECO:0000315"/>
    <property type="project" value="SGD"/>
</dbReference>
<dbReference type="GO" id="GO:0004617">
    <property type="term" value="F:phosphoglycerate dehydrogenase activity"/>
    <property type="evidence" value="ECO:0000250"/>
    <property type="project" value="SGD"/>
</dbReference>
<dbReference type="CDD" id="cd12168">
    <property type="entry name" value="Mand_dh_like"/>
    <property type="match status" value="1"/>
</dbReference>
<dbReference type="FunFam" id="3.40.50.720:FF:000835">
    <property type="entry name" value="Putative hydroxyacid dehydrogenase"/>
    <property type="match status" value="1"/>
</dbReference>
<dbReference type="Gene3D" id="3.40.50.720">
    <property type="entry name" value="NAD(P)-binding Rossmann-like Domain"/>
    <property type="match status" value="2"/>
</dbReference>
<dbReference type="InterPro" id="IPR050223">
    <property type="entry name" value="D-isomer_2-hydroxyacid_DH"/>
</dbReference>
<dbReference type="InterPro" id="IPR029753">
    <property type="entry name" value="D-isomer_DH_CS"/>
</dbReference>
<dbReference type="InterPro" id="IPR006140">
    <property type="entry name" value="D-isomer_DH_NAD-bd"/>
</dbReference>
<dbReference type="InterPro" id="IPR036291">
    <property type="entry name" value="NAD(P)-bd_dom_sf"/>
</dbReference>
<dbReference type="PANTHER" id="PTHR10996:SF178">
    <property type="entry name" value="2-HYDROXYACID DEHYDROGENASE YGL185C-RELATED"/>
    <property type="match status" value="1"/>
</dbReference>
<dbReference type="PANTHER" id="PTHR10996">
    <property type="entry name" value="2-HYDROXYACID DEHYDROGENASE-RELATED"/>
    <property type="match status" value="1"/>
</dbReference>
<dbReference type="Pfam" id="PF02826">
    <property type="entry name" value="2-Hacid_dh_C"/>
    <property type="match status" value="1"/>
</dbReference>
<dbReference type="SUPFAM" id="SSF52283">
    <property type="entry name" value="Formate/glycerate dehydrogenase catalytic domain-like"/>
    <property type="match status" value="1"/>
</dbReference>
<dbReference type="SUPFAM" id="SSF51735">
    <property type="entry name" value="NAD(P)-binding Rossmann-fold domains"/>
    <property type="match status" value="1"/>
</dbReference>
<dbReference type="PROSITE" id="PS00671">
    <property type="entry name" value="D_2_HYDROXYACID_DH_3"/>
    <property type="match status" value="1"/>
</dbReference>
<protein>
    <recommendedName>
        <fullName>Putative 2-hydroxyacid dehydrogenase YGL185C</fullName>
        <ecNumber>1.-.-.-</ecNumber>
    </recommendedName>
</protein>
<comment type="miscellaneous">
    <text evidence="2">Present with 1430 molecules/cell in log phase SD medium.</text>
</comment>
<comment type="similarity">
    <text evidence="3">Belongs to the D-isomer specific 2-hydroxyacid dehydrogenase family.</text>
</comment>
<gene>
    <name type="ordered locus">YGL185C</name>
    <name type="ORF">G1380</name>
</gene>
<accession>P53100</accession>
<accession>D6VTW9</accession>
<name>YGT5_YEAST</name>
<organism>
    <name type="scientific">Saccharomyces cerevisiae (strain ATCC 204508 / S288c)</name>
    <name type="common">Baker's yeast</name>
    <dbReference type="NCBI Taxonomy" id="559292"/>
    <lineage>
        <taxon>Eukaryota</taxon>
        <taxon>Fungi</taxon>
        <taxon>Dikarya</taxon>
        <taxon>Ascomycota</taxon>
        <taxon>Saccharomycotina</taxon>
        <taxon>Saccharomycetes</taxon>
        <taxon>Saccharomycetales</taxon>
        <taxon>Saccharomycetaceae</taxon>
        <taxon>Saccharomyces</taxon>
    </lineage>
</organism>
<sequence length="379" mass="42984">MCDSPATTGKPTILFIADPCETSATLNSKAFKEKFRILRYQLDTKEAFLNFLERHEQDKICAIYAGFPAFKKIGGMTRSIIEHKSFPRKNLKCIVLCSRGYDGWDLDTLRKHEIRLYNYQDDENEKLIDDLKLHQVGNDVADCALWHILEGFRKFSYYQKLSRETGNTLTARAKAAEKSGFAFGHELGNMFAESPRGKKCLILGLGSIGKQVAYKLQYGLGMEIHYCKRSEDCTMSQNESWKFHLLDETIYAKLYQFHAIVVTLPGTPQTEHLINRKFLEHCNPGLILVNLGRGKILDLRAVSDALVTGRINHLGLDVFNKEPEIDEKIRSSDRLTSITPHLGSATKDVFEQSCELALTRILRVVSGEAASDEHFSRVV</sequence>